<protein>
    <recommendedName>
        <fullName evidence="1">Penicillin-binding protein activator LpoB</fullName>
        <shortName evidence="1">PBP activator LpoB</shortName>
    </recommendedName>
</protein>
<gene>
    <name evidence="1" type="primary">lpoB</name>
    <name type="ordered locus">KPN78578_10740</name>
    <name type="ORF">KPN_01102</name>
</gene>
<feature type="signal peptide" evidence="1">
    <location>
        <begin position="1"/>
        <end position="19"/>
    </location>
</feature>
<feature type="chain" id="PRO_0000405785" description="Penicillin-binding protein activator LpoB">
    <location>
        <begin position="20"/>
        <end position="215"/>
    </location>
</feature>
<feature type="region of interest" description="Disordered" evidence="2">
    <location>
        <begin position="28"/>
        <end position="78"/>
    </location>
</feature>
<feature type="compositionally biased region" description="Pro residues" evidence="2">
    <location>
        <begin position="37"/>
        <end position="48"/>
    </location>
</feature>
<feature type="compositionally biased region" description="Low complexity" evidence="2">
    <location>
        <begin position="49"/>
        <end position="58"/>
    </location>
</feature>
<feature type="lipid moiety-binding region" description="N-palmitoyl cysteine" evidence="1">
    <location>
        <position position="20"/>
    </location>
</feature>
<feature type="lipid moiety-binding region" description="S-diacylglycerol cysteine" evidence="1">
    <location>
        <position position="20"/>
    </location>
</feature>
<dbReference type="EMBL" id="CP000647">
    <property type="protein sequence ID" value="ABR76535.1"/>
    <property type="molecule type" value="Genomic_DNA"/>
</dbReference>
<dbReference type="SMR" id="A6T7G4"/>
<dbReference type="STRING" id="272620.KPN_01102"/>
<dbReference type="jPOST" id="A6T7G4"/>
<dbReference type="PaxDb" id="272620-KPN_01102"/>
<dbReference type="DNASU" id="5341235"/>
<dbReference type="EnsemblBacteria" id="ABR76535">
    <property type="protein sequence ID" value="ABR76535"/>
    <property type="gene ID" value="KPN_01102"/>
</dbReference>
<dbReference type="KEGG" id="kpn:KPN_01102"/>
<dbReference type="HOGENOM" id="CLU_092328_0_0_6"/>
<dbReference type="Proteomes" id="UP000000265">
    <property type="component" value="Chromosome"/>
</dbReference>
<dbReference type="GO" id="GO:0031241">
    <property type="term" value="C:periplasmic side of cell outer membrane"/>
    <property type="evidence" value="ECO:0007669"/>
    <property type="project" value="UniProtKB-UniRule"/>
</dbReference>
<dbReference type="GO" id="GO:0030234">
    <property type="term" value="F:enzyme regulator activity"/>
    <property type="evidence" value="ECO:0007669"/>
    <property type="project" value="UniProtKB-UniRule"/>
</dbReference>
<dbReference type="GO" id="GO:0009252">
    <property type="term" value="P:peptidoglycan biosynthetic process"/>
    <property type="evidence" value="ECO:0007669"/>
    <property type="project" value="UniProtKB-UniRule"/>
</dbReference>
<dbReference type="GO" id="GO:0008360">
    <property type="term" value="P:regulation of cell shape"/>
    <property type="evidence" value="ECO:0007669"/>
    <property type="project" value="UniProtKB-KW"/>
</dbReference>
<dbReference type="FunFam" id="3.40.50.10610:FF:000002">
    <property type="entry name" value="Penicillin-binding protein activator LpoB"/>
    <property type="match status" value="1"/>
</dbReference>
<dbReference type="Gene3D" id="3.40.50.10610">
    <property type="entry name" value="ABC-type transport auxiliary lipoprotein component"/>
    <property type="match status" value="1"/>
</dbReference>
<dbReference type="HAMAP" id="MF_01889">
    <property type="entry name" value="LpoB"/>
    <property type="match status" value="1"/>
</dbReference>
<dbReference type="InterPro" id="IPR014094">
    <property type="entry name" value="LpoB"/>
</dbReference>
<dbReference type="NCBIfam" id="TIGR02722">
    <property type="entry name" value="lp"/>
    <property type="match status" value="1"/>
</dbReference>
<dbReference type="PANTHER" id="PTHR40593">
    <property type="entry name" value="PENICILLIN-BINDING PROTEIN ACTIVATOR LPOB"/>
    <property type="match status" value="1"/>
</dbReference>
<dbReference type="PANTHER" id="PTHR40593:SF1">
    <property type="entry name" value="PENICILLIN-BINDING PROTEIN ACTIVATOR LPOB"/>
    <property type="match status" value="1"/>
</dbReference>
<dbReference type="Pfam" id="PF13036">
    <property type="entry name" value="LpoB"/>
    <property type="match status" value="1"/>
</dbReference>
<dbReference type="PROSITE" id="PS51257">
    <property type="entry name" value="PROKAR_LIPOPROTEIN"/>
    <property type="match status" value="1"/>
</dbReference>
<reference key="1">
    <citation type="submission" date="2006-09" db="EMBL/GenBank/DDBJ databases">
        <authorList>
            <consortium name="The Klebsiella pneumonia Genome Sequencing Project"/>
            <person name="McClelland M."/>
            <person name="Sanderson E.K."/>
            <person name="Spieth J."/>
            <person name="Clifton W.S."/>
            <person name="Latreille P."/>
            <person name="Sabo A."/>
            <person name="Pepin K."/>
            <person name="Bhonagiri V."/>
            <person name="Porwollik S."/>
            <person name="Ali J."/>
            <person name="Wilson R.K."/>
        </authorList>
    </citation>
    <scope>NUCLEOTIDE SEQUENCE [LARGE SCALE GENOMIC DNA]</scope>
    <source>
        <strain>ATCC 700721 / MGH 78578</strain>
    </source>
</reference>
<comment type="function">
    <text evidence="1">Regulator of peptidoglycan synthesis that is essential for the function of penicillin-binding protein 1B (PBP1b).</text>
</comment>
<comment type="subunit">
    <text evidence="1">Interacts with PBP1b.</text>
</comment>
<comment type="subcellular location">
    <subcellularLocation>
        <location evidence="1">Cell outer membrane</location>
        <topology evidence="1">Lipid-anchor</topology>
        <orientation evidence="1">Periplasmic side</orientation>
    </subcellularLocation>
</comment>
<comment type="similarity">
    <text evidence="1">Belongs to the LpoB family.</text>
</comment>
<evidence type="ECO:0000255" key="1">
    <source>
        <dbReference type="HAMAP-Rule" id="MF_01889"/>
    </source>
</evidence>
<evidence type="ECO:0000256" key="2">
    <source>
        <dbReference type="SAM" id="MobiDB-lite"/>
    </source>
</evidence>
<sequence length="215" mass="22554">MMKMCRYALITALAIFLAGCAGLREQPAPVEEAKPQPQQPAQPQPTVPTVPAVPSVPAQPGPIEHQDQQSGQPAPRVRHYDWNGAVQPLVGQMLQASGVNAGSILLVDSVNNRTNGSLNAGEATTALRSALAGNGKFTLVSAQQLAVAKQQLGLSPQDSLGSRSKAMGIARNVGAQYVLYSNATGNVNAPELKMQLMLVQTGEIIWSGKGAVQQQ</sequence>
<organism>
    <name type="scientific">Klebsiella pneumoniae subsp. pneumoniae (strain ATCC 700721 / MGH 78578)</name>
    <dbReference type="NCBI Taxonomy" id="272620"/>
    <lineage>
        <taxon>Bacteria</taxon>
        <taxon>Pseudomonadati</taxon>
        <taxon>Pseudomonadota</taxon>
        <taxon>Gammaproteobacteria</taxon>
        <taxon>Enterobacterales</taxon>
        <taxon>Enterobacteriaceae</taxon>
        <taxon>Klebsiella/Raoultella group</taxon>
        <taxon>Klebsiella</taxon>
        <taxon>Klebsiella pneumoniae complex</taxon>
    </lineage>
</organism>
<name>LPOB_KLEP7</name>
<accession>A6T7G4</accession>
<proteinExistence type="inferred from homology"/>
<keyword id="KW-0998">Cell outer membrane</keyword>
<keyword id="KW-0133">Cell shape</keyword>
<keyword id="KW-0449">Lipoprotein</keyword>
<keyword id="KW-0472">Membrane</keyword>
<keyword id="KW-0564">Palmitate</keyword>
<keyword id="KW-0573">Peptidoglycan synthesis</keyword>
<keyword id="KW-0732">Signal</keyword>